<comment type="function">
    <text evidence="1">Catalyzes the dehydration of methylthioribulose-1-phosphate (MTRu-1-P) into 2,3-diketo-5-methylthiopentyl-1-phosphate (DK-MTP-1-P).</text>
</comment>
<comment type="catalytic activity">
    <reaction evidence="1">
        <text>5-(methylsulfanyl)-D-ribulose 1-phosphate = 5-methylsulfanyl-2,3-dioxopentyl phosphate + H2O</text>
        <dbReference type="Rhea" id="RHEA:15549"/>
        <dbReference type="ChEBI" id="CHEBI:15377"/>
        <dbReference type="ChEBI" id="CHEBI:58548"/>
        <dbReference type="ChEBI" id="CHEBI:58828"/>
        <dbReference type="EC" id="4.2.1.109"/>
    </reaction>
</comment>
<comment type="cofactor">
    <cofactor evidence="1">
        <name>Zn(2+)</name>
        <dbReference type="ChEBI" id="CHEBI:29105"/>
    </cofactor>
    <text evidence="1">Binds 1 zinc ion per subunit.</text>
</comment>
<comment type="pathway">
    <text evidence="1">Amino-acid biosynthesis; L-methionine biosynthesis via salvage pathway; L-methionine from S-methyl-5-thio-alpha-D-ribose 1-phosphate: step 2/6.</text>
</comment>
<comment type="similarity">
    <text evidence="1">Belongs to the aldolase class II family. MtnB subfamily.</text>
</comment>
<accession>B0SII1</accession>
<dbReference type="EC" id="4.2.1.109" evidence="1"/>
<dbReference type="EMBL" id="CP000778">
    <property type="protein sequence ID" value="ABZ96015.1"/>
    <property type="molecule type" value="Genomic_DNA"/>
</dbReference>
<dbReference type="RefSeq" id="WP_012476670.1">
    <property type="nucleotide sequence ID" value="NC_010845.1"/>
</dbReference>
<dbReference type="SMR" id="B0SII1"/>
<dbReference type="KEGG" id="lbf:LBF_4193"/>
<dbReference type="HOGENOM" id="CLU_006033_4_1_12"/>
<dbReference type="UniPathway" id="UPA00904">
    <property type="reaction ID" value="UER00875"/>
</dbReference>
<dbReference type="GO" id="GO:0005737">
    <property type="term" value="C:cytoplasm"/>
    <property type="evidence" value="ECO:0007669"/>
    <property type="project" value="InterPro"/>
</dbReference>
<dbReference type="GO" id="GO:0046570">
    <property type="term" value="F:methylthioribulose 1-phosphate dehydratase activity"/>
    <property type="evidence" value="ECO:0007669"/>
    <property type="project" value="UniProtKB-UniRule"/>
</dbReference>
<dbReference type="GO" id="GO:0008270">
    <property type="term" value="F:zinc ion binding"/>
    <property type="evidence" value="ECO:0007669"/>
    <property type="project" value="UniProtKB-UniRule"/>
</dbReference>
<dbReference type="GO" id="GO:0019509">
    <property type="term" value="P:L-methionine salvage from methylthioadenosine"/>
    <property type="evidence" value="ECO:0007669"/>
    <property type="project" value="UniProtKB-UniRule"/>
</dbReference>
<dbReference type="Gene3D" id="3.40.225.10">
    <property type="entry name" value="Class II aldolase/adducin N-terminal domain"/>
    <property type="match status" value="1"/>
</dbReference>
<dbReference type="HAMAP" id="MF_01677">
    <property type="entry name" value="Salvage_MtnB"/>
    <property type="match status" value="1"/>
</dbReference>
<dbReference type="InterPro" id="IPR001303">
    <property type="entry name" value="Aldolase_II/adducin_N"/>
</dbReference>
<dbReference type="InterPro" id="IPR036409">
    <property type="entry name" value="Aldolase_II/adducin_N_sf"/>
</dbReference>
<dbReference type="InterPro" id="IPR017714">
    <property type="entry name" value="MethylthioRu-1-P_deHdtase_MtnB"/>
</dbReference>
<dbReference type="NCBIfam" id="TIGR03328">
    <property type="entry name" value="salvage_mtnB"/>
    <property type="match status" value="1"/>
</dbReference>
<dbReference type="PANTHER" id="PTHR10640">
    <property type="entry name" value="METHYLTHIORIBULOSE-1-PHOSPHATE DEHYDRATASE"/>
    <property type="match status" value="1"/>
</dbReference>
<dbReference type="PANTHER" id="PTHR10640:SF7">
    <property type="entry name" value="METHYLTHIORIBULOSE-1-PHOSPHATE DEHYDRATASE"/>
    <property type="match status" value="1"/>
</dbReference>
<dbReference type="Pfam" id="PF00596">
    <property type="entry name" value="Aldolase_II"/>
    <property type="match status" value="1"/>
</dbReference>
<dbReference type="SMART" id="SM01007">
    <property type="entry name" value="Aldolase_II"/>
    <property type="match status" value="1"/>
</dbReference>
<dbReference type="SUPFAM" id="SSF53639">
    <property type="entry name" value="AraD/HMP-PK domain-like"/>
    <property type="match status" value="1"/>
</dbReference>
<sequence length="209" mass="23373">MDLITSLQEITKLSHLYYERQWMYATAGNLSTRDGSSRDQFWITASGKHKGELKDTDFVCVSVADGTLLKASDGLKPSAETSIHQVLYSQMPDIGCCLHVHTIDSNLLEFGVGKEEGSREIPIPPIEIIKAFGIWDEKPNLTMPVFYNHTHVPTIADEIKRYFISVGIPKVPFLLIEGHGPTVWGKSIAEANKHLEAVHFLLQVMARKV</sequence>
<name>MTNB_LEPBA</name>
<proteinExistence type="inferred from homology"/>
<organism>
    <name type="scientific">Leptospira biflexa serovar Patoc (strain Patoc 1 / Ames)</name>
    <dbReference type="NCBI Taxonomy" id="355278"/>
    <lineage>
        <taxon>Bacteria</taxon>
        <taxon>Pseudomonadati</taxon>
        <taxon>Spirochaetota</taxon>
        <taxon>Spirochaetia</taxon>
        <taxon>Leptospirales</taxon>
        <taxon>Leptospiraceae</taxon>
        <taxon>Leptospira</taxon>
    </lineage>
</organism>
<feature type="chain" id="PRO_0000357086" description="Methylthioribulose-1-phosphate dehydratase">
    <location>
        <begin position="1"/>
        <end position="209"/>
    </location>
</feature>
<feature type="binding site" evidence="1">
    <location>
        <position position="99"/>
    </location>
    <ligand>
        <name>Zn(2+)</name>
        <dbReference type="ChEBI" id="CHEBI:29105"/>
    </ligand>
</feature>
<feature type="binding site" evidence="1">
    <location>
        <position position="101"/>
    </location>
    <ligand>
        <name>Zn(2+)</name>
        <dbReference type="ChEBI" id="CHEBI:29105"/>
    </ligand>
</feature>
<evidence type="ECO:0000255" key="1">
    <source>
        <dbReference type="HAMAP-Rule" id="MF_01677"/>
    </source>
</evidence>
<gene>
    <name evidence="1" type="primary">mtnB</name>
    <name type="ordered locus">LBF_4193</name>
</gene>
<keyword id="KW-0028">Amino-acid biosynthesis</keyword>
<keyword id="KW-0456">Lyase</keyword>
<keyword id="KW-0479">Metal-binding</keyword>
<keyword id="KW-0486">Methionine biosynthesis</keyword>
<keyword id="KW-0862">Zinc</keyword>
<reference key="1">
    <citation type="journal article" date="2008" name="PLoS ONE">
        <title>Genome sequence of the saprophyte Leptospira biflexa provides insights into the evolution of Leptospira and the pathogenesis of leptospirosis.</title>
        <authorList>
            <person name="Picardeau M."/>
            <person name="Bulach D.M."/>
            <person name="Bouchier C."/>
            <person name="Zuerner R.L."/>
            <person name="Zidane N."/>
            <person name="Wilson P.J."/>
            <person name="Creno S."/>
            <person name="Kuczek E.S."/>
            <person name="Bommezzadri S."/>
            <person name="Davis J.C."/>
            <person name="McGrath A."/>
            <person name="Johnson M.J."/>
            <person name="Boursaux-Eude C."/>
            <person name="Seemann T."/>
            <person name="Rouy Z."/>
            <person name="Coppel R.L."/>
            <person name="Rood J.I."/>
            <person name="Lajus A."/>
            <person name="Davies J.K."/>
            <person name="Medigue C."/>
            <person name="Adler B."/>
        </authorList>
    </citation>
    <scope>NUCLEOTIDE SEQUENCE [LARGE SCALE GENOMIC DNA]</scope>
    <source>
        <strain>Patoc 1 / Ames</strain>
    </source>
</reference>
<protein>
    <recommendedName>
        <fullName evidence="1">Methylthioribulose-1-phosphate dehydratase</fullName>
        <shortName evidence="1">MTRu-1-P dehydratase</shortName>
        <ecNumber evidence="1">4.2.1.109</ecNumber>
    </recommendedName>
</protein>